<protein>
    <recommendedName>
        <fullName evidence="1">ATP synthase subunit a</fullName>
    </recommendedName>
    <alternativeName>
        <fullName evidence="1">ATP synthase F0 sector subunit a</fullName>
    </alternativeName>
    <alternativeName>
        <fullName evidence="1">F-ATPase subunit 6</fullName>
    </alternativeName>
</protein>
<comment type="function">
    <text evidence="1">Key component of the proton channel; it plays a direct role in the translocation of protons across the membrane.</text>
</comment>
<comment type="subunit">
    <text evidence="1">F-type ATPases have 2 components, CF(1) - the catalytic core - and CF(0) - the membrane proton channel. CF(1) has five subunits: alpha(3), beta(3), gamma(1), delta(1), epsilon(1). CF(0) has three main subunits: a(1), b(2) and c(9-12). The alpha and beta chains form an alternating ring which encloses part of the gamma chain. CF(1) is attached to CF(0) by a central stalk formed by the gamma and epsilon chains, while a peripheral stalk is formed by the delta and b chains.</text>
</comment>
<comment type="subcellular location">
    <subcellularLocation>
        <location evidence="1">Cell inner membrane</location>
        <topology evidence="1">Multi-pass membrane protein</topology>
    </subcellularLocation>
</comment>
<comment type="similarity">
    <text evidence="1">Belongs to the ATPase A chain family.</text>
</comment>
<gene>
    <name evidence="1" type="primary">atpB</name>
    <name type="ordered locus">CHAB381_0723</name>
</gene>
<organism>
    <name type="scientific">Campylobacter hominis (strain ATCC BAA-381 / DSM 21671 / CCUG 45161 / LMG 19568 / NCTC 13146 / CH001A)</name>
    <dbReference type="NCBI Taxonomy" id="360107"/>
    <lineage>
        <taxon>Bacteria</taxon>
        <taxon>Pseudomonadati</taxon>
        <taxon>Campylobacterota</taxon>
        <taxon>Epsilonproteobacteria</taxon>
        <taxon>Campylobacterales</taxon>
        <taxon>Campylobacteraceae</taxon>
        <taxon>Campylobacter</taxon>
    </lineage>
</organism>
<proteinExistence type="inferred from homology"/>
<feature type="chain" id="PRO_0000362263" description="ATP synthase subunit a">
    <location>
        <begin position="1"/>
        <end position="228"/>
    </location>
</feature>
<feature type="transmembrane region" description="Helical" evidence="1">
    <location>
        <begin position="19"/>
        <end position="39"/>
    </location>
</feature>
<feature type="transmembrane region" description="Helical" evidence="1">
    <location>
        <begin position="81"/>
        <end position="101"/>
    </location>
</feature>
<feature type="transmembrane region" description="Helical" evidence="1">
    <location>
        <begin position="107"/>
        <end position="127"/>
    </location>
</feature>
<feature type="transmembrane region" description="Helical" evidence="1">
    <location>
        <begin position="136"/>
        <end position="156"/>
    </location>
</feature>
<feature type="transmembrane region" description="Helical" evidence="1">
    <location>
        <begin position="178"/>
        <end position="198"/>
    </location>
</feature>
<feature type="transmembrane region" description="Helical" evidence="1">
    <location>
        <begin position="204"/>
        <end position="224"/>
    </location>
</feature>
<accession>A7I1B2</accession>
<reference key="1">
    <citation type="submission" date="2007-07" db="EMBL/GenBank/DDBJ databases">
        <title>Complete genome sequence of Campylobacter hominis ATCC BAA-381, a commensal isolated from the human gastrointestinal tract.</title>
        <authorList>
            <person name="Fouts D.E."/>
            <person name="Mongodin E.F."/>
            <person name="Puiu D."/>
            <person name="Sebastian Y."/>
            <person name="Miller W.G."/>
            <person name="Mandrell R.E."/>
            <person name="Nelson K.E."/>
        </authorList>
    </citation>
    <scope>NUCLEOTIDE SEQUENCE [LARGE SCALE GENOMIC DNA]</scope>
    <source>
        <strain>ATCC BAA-381 / DSM 21671 / CCUG 45161 / LMG 19568 / NCTC 13146 / CH001A</strain>
    </source>
</reference>
<sequence length="228" mass="25435">MLKDIFLFWGSLFGYDHTAIYIFHFLLVVAITMFIAVAVTKSMRLVPRGLQNIIEAYLSGVIALGKDAMGSEKLARKYMPLIATIGFIVFLSNIIGLIPGFEAPTASLNLTLSLTLCVFFYYHFEGIREKGFIKYFAGFCGPVKAIAPFMFVIEVISHLSRIISLSFRLFGNIKGDDLFLLVMLTLAPVLVPMIPYALLSFMAILQAFIFMVLSYVYLAGAVVVDEEH</sequence>
<name>ATP6_CAMHC</name>
<dbReference type="EMBL" id="CP000776">
    <property type="protein sequence ID" value="ABS51089.1"/>
    <property type="molecule type" value="Genomic_DNA"/>
</dbReference>
<dbReference type="RefSeq" id="WP_012108591.1">
    <property type="nucleotide sequence ID" value="NC_009714.1"/>
</dbReference>
<dbReference type="SMR" id="A7I1B2"/>
<dbReference type="STRING" id="360107.CHAB381_0723"/>
<dbReference type="KEGG" id="cha:CHAB381_0723"/>
<dbReference type="eggNOG" id="COG0356">
    <property type="taxonomic scope" value="Bacteria"/>
</dbReference>
<dbReference type="HOGENOM" id="CLU_041018_2_2_7"/>
<dbReference type="OrthoDB" id="9789241at2"/>
<dbReference type="Proteomes" id="UP000002407">
    <property type="component" value="Chromosome"/>
</dbReference>
<dbReference type="GO" id="GO:0005886">
    <property type="term" value="C:plasma membrane"/>
    <property type="evidence" value="ECO:0007669"/>
    <property type="project" value="UniProtKB-SubCell"/>
</dbReference>
<dbReference type="GO" id="GO:0045259">
    <property type="term" value="C:proton-transporting ATP synthase complex"/>
    <property type="evidence" value="ECO:0007669"/>
    <property type="project" value="UniProtKB-KW"/>
</dbReference>
<dbReference type="GO" id="GO:0046933">
    <property type="term" value="F:proton-transporting ATP synthase activity, rotational mechanism"/>
    <property type="evidence" value="ECO:0007669"/>
    <property type="project" value="UniProtKB-UniRule"/>
</dbReference>
<dbReference type="GO" id="GO:0042777">
    <property type="term" value="P:proton motive force-driven plasma membrane ATP synthesis"/>
    <property type="evidence" value="ECO:0007669"/>
    <property type="project" value="TreeGrafter"/>
</dbReference>
<dbReference type="CDD" id="cd00310">
    <property type="entry name" value="ATP-synt_Fo_a_6"/>
    <property type="match status" value="1"/>
</dbReference>
<dbReference type="FunFam" id="1.20.120.220:FF:000006">
    <property type="entry name" value="ATP synthase subunit a"/>
    <property type="match status" value="1"/>
</dbReference>
<dbReference type="Gene3D" id="1.20.120.220">
    <property type="entry name" value="ATP synthase, F0 complex, subunit A"/>
    <property type="match status" value="1"/>
</dbReference>
<dbReference type="HAMAP" id="MF_01393">
    <property type="entry name" value="ATP_synth_a_bact"/>
    <property type="match status" value="1"/>
</dbReference>
<dbReference type="InterPro" id="IPR045082">
    <property type="entry name" value="ATP_syn_F0_a_bact/chloroplast"/>
</dbReference>
<dbReference type="InterPro" id="IPR000568">
    <property type="entry name" value="ATP_synth_F0_asu"/>
</dbReference>
<dbReference type="InterPro" id="IPR023011">
    <property type="entry name" value="ATP_synth_F0_asu_AS"/>
</dbReference>
<dbReference type="InterPro" id="IPR035908">
    <property type="entry name" value="F0_ATP_A_sf"/>
</dbReference>
<dbReference type="NCBIfam" id="TIGR01131">
    <property type="entry name" value="ATP_synt_6_or_A"/>
    <property type="match status" value="1"/>
</dbReference>
<dbReference type="NCBIfam" id="NF004481">
    <property type="entry name" value="PRK05815.2-3"/>
    <property type="match status" value="1"/>
</dbReference>
<dbReference type="PANTHER" id="PTHR42823">
    <property type="entry name" value="ATP SYNTHASE SUBUNIT A, CHLOROPLASTIC"/>
    <property type="match status" value="1"/>
</dbReference>
<dbReference type="PANTHER" id="PTHR42823:SF3">
    <property type="entry name" value="ATP SYNTHASE SUBUNIT A, CHLOROPLASTIC"/>
    <property type="match status" value="1"/>
</dbReference>
<dbReference type="Pfam" id="PF00119">
    <property type="entry name" value="ATP-synt_A"/>
    <property type="match status" value="1"/>
</dbReference>
<dbReference type="PRINTS" id="PR00123">
    <property type="entry name" value="ATPASEA"/>
</dbReference>
<dbReference type="SUPFAM" id="SSF81336">
    <property type="entry name" value="F1F0 ATP synthase subunit A"/>
    <property type="match status" value="1"/>
</dbReference>
<dbReference type="PROSITE" id="PS00449">
    <property type="entry name" value="ATPASE_A"/>
    <property type="match status" value="1"/>
</dbReference>
<keyword id="KW-0066">ATP synthesis</keyword>
<keyword id="KW-0997">Cell inner membrane</keyword>
<keyword id="KW-1003">Cell membrane</keyword>
<keyword id="KW-0138">CF(0)</keyword>
<keyword id="KW-0375">Hydrogen ion transport</keyword>
<keyword id="KW-0406">Ion transport</keyword>
<keyword id="KW-0472">Membrane</keyword>
<keyword id="KW-1185">Reference proteome</keyword>
<keyword id="KW-0812">Transmembrane</keyword>
<keyword id="KW-1133">Transmembrane helix</keyword>
<keyword id="KW-0813">Transport</keyword>
<evidence type="ECO:0000255" key="1">
    <source>
        <dbReference type="HAMAP-Rule" id="MF_01393"/>
    </source>
</evidence>